<comment type="function">
    <text evidence="1">Catalyzes the GTP-dependent ribosomal translocation step during translation elongation. During this step, the ribosome changes from the pre-translocational (PRE) to the post-translocational (POST) state as the newly formed A-site-bound peptidyl-tRNA and P-site-bound deacylated tRNA move to the P and E sites, respectively. Catalyzes the coordinated movement of the two tRNA molecules, the mRNA and conformational changes in the ribosome.</text>
</comment>
<comment type="subcellular location">
    <subcellularLocation>
        <location evidence="1">Cytoplasm</location>
    </subcellularLocation>
</comment>
<comment type="similarity">
    <text evidence="1">Belongs to the TRAFAC class translation factor GTPase superfamily. Classic translation factor GTPase family. EF-G/EF-2 subfamily.</text>
</comment>
<proteinExistence type="inferred from homology"/>
<protein>
    <recommendedName>
        <fullName evidence="1">Elongation factor G</fullName>
        <shortName evidence="1">EF-G</shortName>
    </recommendedName>
</protein>
<feature type="chain" id="PRO_0000225194" description="Elongation factor G">
    <location>
        <begin position="1"/>
        <end position="704"/>
    </location>
</feature>
<feature type="domain" description="tr-type G">
    <location>
        <begin position="8"/>
        <end position="291"/>
    </location>
</feature>
<feature type="binding site" evidence="1">
    <location>
        <begin position="17"/>
        <end position="24"/>
    </location>
    <ligand>
        <name>GTP</name>
        <dbReference type="ChEBI" id="CHEBI:37565"/>
    </ligand>
</feature>
<feature type="binding site" evidence="1">
    <location>
        <begin position="88"/>
        <end position="92"/>
    </location>
    <ligand>
        <name>GTP</name>
        <dbReference type="ChEBI" id="CHEBI:37565"/>
    </ligand>
</feature>
<feature type="binding site" evidence="1">
    <location>
        <begin position="142"/>
        <end position="145"/>
    </location>
    <ligand>
        <name>GTP</name>
        <dbReference type="ChEBI" id="CHEBI:37565"/>
    </ligand>
</feature>
<keyword id="KW-0963">Cytoplasm</keyword>
<keyword id="KW-0251">Elongation factor</keyword>
<keyword id="KW-0342">GTP-binding</keyword>
<keyword id="KW-0547">Nucleotide-binding</keyword>
<keyword id="KW-0648">Protein biosynthesis</keyword>
<keyword id="KW-1185">Reference proteome</keyword>
<gene>
    <name evidence="1" type="primary">fusA</name>
    <name type="ordered locus">BPEN_585</name>
</gene>
<accession>Q492B1</accession>
<dbReference type="EMBL" id="CP000016">
    <property type="protein sequence ID" value="AAZ41191.1"/>
    <property type="molecule type" value="Genomic_DNA"/>
</dbReference>
<dbReference type="RefSeq" id="WP_011283102.1">
    <property type="nucleotide sequence ID" value="NC_007292.1"/>
</dbReference>
<dbReference type="SMR" id="Q492B1"/>
<dbReference type="STRING" id="291272.BPEN_585"/>
<dbReference type="KEGG" id="bpn:BPEN_585"/>
<dbReference type="eggNOG" id="COG0480">
    <property type="taxonomic scope" value="Bacteria"/>
</dbReference>
<dbReference type="HOGENOM" id="CLU_002794_4_1_6"/>
<dbReference type="OrthoDB" id="9804431at2"/>
<dbReference type="Proteomes" id="UP000007794">
    <property type="component" value="Chromosome"/>
</dbReference>
<dbReference type="GO" id="GO:0005737">
    <property type="term" value="C:cytoplasm"/>
    <property type="evidence" value="ECO:0007669"/>
    <property type="project" value="UniProtKB-SubCell"/>
</dbReference>
<dbReference type="GO" id="GO:0005525">
    <property type="term" value="F:GTP binding"/>
    <property type="evidence" value="ECO:0007669"/>
    <property type="project" value="UniProtKB-UniRule"/>
</dbReference>
<dbReference type="GO" id="GO:0003924">
    <property type="term" value="F:GTPase activity"/>
    <property type="evidence" value="ECO:0007669"/>
    <property type="project" value="InterPro"/>
</dbReference>
<dbReference type="GO" id="GO:0097216">
    <property type="term" value="F:guanosine tetraphosphate binding"/>
    <property type="evidence" value="ECO:0007669"/>
    <property type="project" value="UniProtKB-ARBA"/>
</dbReference>
<dbReference type="GO" id="GO:0003746">
    <property type="term" value="F:translation elongation factor activity"/>
    <property type="evidence" value="ECO:0007669"/>
    <property type="project" value="UniProtKB-UniRule"/>
</dbReference>
<dbReference type="GO" id="GO:0032790">
    <property type="term" value="P:ribosome disassembly"/>
    <property type="evidence" value="ECO:0007669"/>
    <property type="project" value="TreeGrafter"/>
</dbReference>
<dbReference type="CDD" id="cd01886">
    <property type="entry name" value="EF-G"/>
    <property type="match status" value="1"/>
</dbReference>
<dbReference type="CDD" id="cd16262">
    <property type="entry name" value="EFG_III"/>
    <property type="match status" value="1"/>
</dbReference>
<dbReference type="CDD" id="cd01434">
    <property type="entry name" value="EFG_mtEFG1_IV"/>
    <property type="match status" value="1"/>
</dbReference>
<dbReference type="CDD" id="cd03713">
    <property type="entry name" value="EFG_mtEFG_C"/>
    <property type="match status" value="1"/>
</dbReference>
<dbReference type="CDD" id="cd04088">
    <property type="entry name" value="EFG_mtEFG_II"/>
    <property type="match status" value="1"/>
</dbReference>
<dbReference type="FunFam" id="2.40.30.10:FF:000006">
    <property type="entry name" value="Elongation factor G"/>
    <property type="match status" value="1"/>
</dbReference>
<dbReference type="FunFam" id="3.30.230.10:FF:000003">
    <property type="entry name" value="Elongation factor G"/>
    <property type="match status" value="1"/>
</dbReference>
<dbReference type="FunFam" id="3.30.70.240:FF:000001">
    <property type="entry name" value="Elongation factor G"/>
    <property type="match status" value="1"/>
</dbReference>
<dbReference type="FunFam" id="3.30.70.870:FF:000001">
    <property type="entry name" value="Elongation factor G"/>
    <property type="match status" value="1"/>
</dbReference>
<dbReference type="FunFam" id="3.40.50.300:FF:000029">
    <property type="entry name" value="Elongation factor G"/>
    <property type="match status" value="1"/>
</dbReference>
<dbReference type="Gene3D" id="3.30.230.10">
    <property type="match status" value="1"/>
</dbReference>
<dbReference type="Gene3D" id="3.30.70.240">
    <property type="match status" value="1"/>
</dbReference>
<dbReference type="Gene3D" id="3.30.70.870">
    <property type="entry name" value="Elongation Factor G (Translational Gtpase), domain 3"/>
    <property type="match status" value="1"/>
</dbReference>
<dbReference type="Gene3D" id="3.40.50.300">
    <property type="entry name" value="P-loop containing nucleotide triphosphate hydrolases"/>
    <property type="match status" value="1"/>
</dbReference>
<dbReference type="Gene3D" id="2.40.30.10">
    <property type="entry name" value="Translation factors"/>
    <property type="match status" value="1"/>
</dbReference>
<dbReference type="HAMAP" id="MF_00054_B">
    <property type="entry name" value="EF_G_EF_2_B"/>
    <property type="match status" value="1"/>
</dbReference>
<dbReference type="InterPro" id="IPR041095">
    <property type="entry name" value="EFG_II"/>
</dbReference>
<dbReference type="InterPro" id="IPR009022">
    <property type="entry name" value="EFG_III"/>
</dbReference>
<dbReference type="InterPro" id="IPR035647">
    <property type="entry name" value="EFG_III/V"/>
</dbReference>
<dbReference type="InterPro" id="IPR047872">
    <property type="entry name" value="EFG_IV"/>
</dbReference>
<dbReference type="InterPro" id="IPR035649">
    <property type="entry name" value="EFG_V"/>
</dbReference>
<dbReference type="InterPro" id="IPR000640">
    <property type="entry name" value="EFG_V-like"/>
</dbReference>
<dbReference type="InterPro" id="IPR004161">
    <property type="entry name" value="EFTu-like_2"/>
</dbReference>
<dbReference type="InterPro" id="IPR031157">
    <property type="entry name" value="G_TR_CS"/>
</dbReference>
<dbReference type="InterPro" id="IPR027417">
    <property type="entry name" value="P-loop_NTPase"/>
</dbReference>
<dbReference type="InterPro" id="IPR020568">
    <property type="entry name" value="Ribosomal_Su5_D2-typ_SF"/>
</dbReference>
<dbReference type="InterPro" id="IPR014721">
    <property type="entry name" value="Ribsml_uS5_D2-typ_fold_subgr"/>
</dbReference>
<dbReference type="InterPro" id="IPR005225">
    <property type="entry name" value="Small_GTP-bd"/>
</dbReference>
<dbReference type="InterPro" id="IPR000795">
    <property type="entry name" value="T_Tr_GTP-bd_dom"/>
</dbReference>
<dbReference type="InterPro" id="IPR009000">
    <property type="entry name" value="Transl_B-barrel_sf"/>
</dbReference>
<dbReference type="InterPro" id="IPR004540">
    <property type="entry name" value="Transl_elong_EFG/EF2"/>
</dbReference>
<dbReference type="InterPro" id="IPR005517">
    <property type="entry name" value="Transl_elong_EFG/EF2_IV"/>
</dbReference>
<dbReference type="NCBIfam" id="TIGR00484">
    <property type="entry name" value="EF-G"/>
    <property type="match status" value="1"/>
</dbReference>
<dbReference type="NCBIfam" id="NF009381">
    <property type="entry name" value="PRK12740.1-5"/>
    <property type="match status" value="1"/>
</dbReference>
<dbReference type="NCBIfam" id="TIGR00231">
    <property type="entry name" value="small_GTP"/>
    <property type="match status" value="1"/>
</dbReference>
<dbReference type="PANTHER" id="PTHR43261:SF1">
    <property type="entry name" value="RIBOSOME-RELEASING FACTOR 2, MITOCHONDRIAL"/>
    <property type="match status" value="1"/>
</dbReference>
<dbReference type="PANTHER" id="PTHR43261">
    <property type="entry name" value="TRANSLATION ELONGATION FACTOR G-RELATED"/>
    <property type="match status" value="1"/>
</dbReference>
<dbReference type="Pfam" id="PF00679">
    <property type="entry name" value="EFG_C"/>
    <property type="match status" value="1"/>
</dbReference>
<dbReference type="Pfam" id="PF14492">
    <property type="entry name" value="EFG_III"/>
    <property type="match status" value="1"/>
</dbReference>
<dbReference type="Pfam" id="PF03764">
    <property type="entry name" value="EFG_IV"/>
    <property type="match status" value="1"/>
</dbReference>
<dbReference type="Pfam" id="PF00009">
    <property type="entry name" value="GTP_EFTU"/>
    <property type="match status" value="1"/>
</dbReference>
<dbReference type="Pfam" id="PF03144">
    <property type="entry name" value="GTP_EFTU_D2"/>
    <property type="match status" value="1"/>
</dbReference>
<dbReference type="PRINTS" id="PR00315">
    <property type="entry name" value="ELONGATNFCT"/>
</dbReference>
<dbReference type="SMART" id="SM00838">
    <property type="entry name" value="EFG_C"/>
    <property type="match status" value="1"/>
</dbReference>
<dbReference type="SMART" id="SM00889">
    <property type="entry name" value="EFG_IV"/>
    <property type="match status" value="1"/>
</dbReference>
<dbReference type="SUPFAM" id="SSF54980">
    <property type="entry name" value="EF-G C-terminal domain-like"/>
    <property type="match status" value="2"/>
</dbReference>
<dbReference type="SUPFAM" id="SSF52540">
    <property type="entry name" value="P-loop containing nucleoside triphosphate hydrolases"/>
    <property type="match status" value="1"/>
</dbReference>
<dbReference type="SUPFAM" id="SSF54211">
    <property type="entry name" value="Ribosomal protein S5 domain 2-like"/>
    <property type="match status" value="1"/>
</dbReference>
<dbReference type="SUPFAM" id="SSF50447">
    <property type="entry name" value="Translation proteins"/>
    <property type="match status" value="1"/>
</dbReference>
<dbReference type="PROSITE" id="PS00301">
    <property type="entry name" value="G_TR_1"/>
    <property type="match status" value="1"/>
</dbReference>
<dbReference type="PROSITE" id="PS51722">
    <property type="entry name" value="G_TR_2"/>
    <property type="match status" value="1"/>
</dbReference>
<evidence type="ECO:0000255" key="1">
    <source>
        <dbReference type="HAMAP-Rule" id="MF_00054"/>
    </source>
</evidence>
<organism>
    <name type="scientific">Blochmanniella pennsylvanica (strain BPEN)</name>
    <dbReference type="NCBI Taxonomy" id="291272"/>
    <lineage>
        <taxon>Bacteria</taxon>
        <taxon>Pseudomonadati</taxon>
        <taxon>Pseudomonadota</taxon>
        <taxon>Gammaproteobacteria</taxon>
        <taxon>Enterobacterales</taxon>
        <taxon>Enterobacteriaceae</taxon>
        <taxon>ant endosymbionts</taxon>
        <taxon>Candidatus Blochmanniella</taxon>
    </lineage>
</organism>
<name>EFG_BLOPB</name>
<sequence length="704" mass="78491">MARVTPIVRYRNIGISAHIDAGKTTTTERILFYTGVNHKIGEVHTGSATMDWMEQEQERGITITSAATTCFWSGMANQFDSHRINIIDTPGHVDFTIEVERSMRILDGVVMVYCAVGGVQPQSETVWRQANKYKVPRIAFINKMDRVGADYLRVVEQLKTRLFANPVPIQLAVGSEDKFTGIIDLIKMKAIHWNELDQGVTFSYSEIPDNLTDLSGIWRKHLIESAVEVSEELMDKYLSNSDQLTEQEIKQALRQRVLSNEIVLVTCGSAFKNKGVQAMLDAVVEYLPSPSDVTSITGVLKDGSTRVNRHANDHEPFSALAFKIATDPFVGNLTFFRVYSGVVSSGDSVLNPIKEKRERFGRIVQMHANKREEIKSVHAGDIAAAIGLKDVDTGDTLCAPSSPIILERMEFPEPVISVMVEAKTKSDQEKMGFALNRLAQEDPSFRVWIDKDSGQTIIAGMGELHLEILVERMRREFNVEANVGKPQVAYRETIRTSVKQEGKFIRQSGGRGQFGHVWLRIEPMPAREEGYKFLNEIVGGAVPKEYIPAVDKGVREQISNGILAGYPIVDVCVTIFDGSYHEVDSSEIAFKIAGSIAFKEGFMKAHPVLLEPIMNVEIETPEDYMGDVIADLNRRRGIISGLENSTISGKIICAQVPLSEMFGYATGLRSQTQGRASYSMEFLKYNEVPNSIAQIIINSRQIKQ</sequence>
<reference key="1">
    <citation type="journal article" date="2005" name="Genome Res.">
        <title>Genome sequence of Blochmannia pennsylvanicus indicates parallel evolutionary trends among bacterial mutualists of insects.</title>
        <authorList>
            <person name="Degnan P.H."/>
            <person name="Lazarus A.B."/>
            <person name="Wernegreen J.J."/>
        </authorList>
    </citation>
    <scope>NUCLEOTIDE SEQUENCE [LARGE SCALE GENOMIC DNA]</scope>
    <source>
        <strain>BPEN</strain>
    </source>
</reference>